<feature type="chain" id="PRO_1000164030" description="Regulatory protein RecX">
    <location>
        <begin position="1"/>
        <end position="258"/>
    </location>
</feature>
<name>RECX_STRZP</name>
<evidence type="ECO:0000255" key="1">
    <source>
        <dbReference type="HAMAP-Rule" id="MF_01114"/>
    </source>
</evidence>
<dbReference type="EMBL" id="CP000920">
    <property type="protein sequence ID" value="ACO20775.1"/>
    <property type="molecule type" value="Genomic_DNA"/>
</dbReference>
<dbReference type="RefSeq" id="WP_000705069.1">
    <property type="nucleotide sequence ID" value="NC_012467.1"/>
</dbReference>
<dbReference type="SMR" id="C1CML5"/>
<dbReference type="KEGG" id="spp:SPP_1931"/>
<dbReference type="HOGENOM" id="CLU_066607_4_0_9"/>
<dbReference type="GO" id="GO:0005737">
    <property type="term" value="C:cytoplasm"/>
    <property type="evidence" value="ECO:0007669"/>
    <property type="project" value="UniProtKB-SubCell"/>
</dbReference>
<dbReference type="GO" id="GO:0006282">
    <property type="term" value="P:regulation of DNA repair"/>
    <property type="evidence" value="ECO:0007669"/>
    <property type="project" value="UniProtKB-UniRule"/>
</dbReference>
<dbReference type="Gene3D" id="1.10.10.10">
    <property type="entry name" value="Winged helix-like DNA-binding domain superfamily/Winged helix DNA-binding domain"/>
    <property type="match status" value="4"/>
</dbReference>
<dbReference type="HAMAP" id="MF_01114">
    <property type="entry name" value="RecX"/>
    <property type="match status" value="1"/>
</dbReference>
<dbReference type="InterPro" id="IPR053926">
    <property type="entry name" value="RecX_HTH_1st"/>
</dbReference>
<dbReference type="InterPro" id="IPR053924">
    <property type="entry name" value="RecX_HTH_2nd"/>
</dbReference>
<dbReference type="InterPro" id="IPR053925">
    <property type="entry name" value="RecX_HTH_3rd"/>
</dbReference>
<dbReference type="InterPro" id="IPR003783">
    <property type="entry name" value="Regulatory_RecX"/>
</dbReference>
<dbReference type="InterPro" id="IPR036388">
    <property type="entry name" value="WH-like_DNA-bd_sf"/>
</dbReference>
<dbReference type="NCBIfam" id="NF010733">
    <property type="entry name" value="PRK14135.1"/>
    <property type="match status" value="1"/>
</dbReference>
<dbReference type="PANTHER" id="PTHR33602">
    <property type="entry name" value="REGULATORY PROTEIN RECX FAMILY PROTEIN"/>
    <property type="match status" value="1"/>
</dbReference>
<dbReference type="PANTHER" id="PTHR33602:SF1">
    <property type="entry name" value="REGULATORY PROTEIN RECX FAMILY PROTEIN"/>
    <property type="match status" value="1"/>
</dbReference>
<dbReference type="Pfam" id="PF21982">
    <property type="entry name" value="RecX_HTH1"/>
    <property type="match status" value="1"/>
</dbReference>
<dbReference type="Pfam" id="PF02631">
    <property type="entry name" value="RecX_HTH2"/>
    <property type="match status" value="1"/>
</dbReference>
<dbReference type="Pfam" id="PF21981">
    <property type="entry name" value="RecX_HTH3"/>
    <property type="match status" value="1"/>
</dbReference>
<gene>
    <name evidence="1" type="primary">recX</name>
    <name type="ordered locus">SPP_1931</name>
</gene>
<protein>
    <recommendedName>
        <fullName evidence="1">Regulatory protein RecX</fullName>
    </recommendedName>
</protein>
<reference key="1">
    <citation type="journal article" date="2010" name="Genome Biol.">
        <title>Structure and dynamics of the pan-genome of Streptococcus pneumoniae and closely related species.</title>
        <authorList>
            <person name="Donati C."/>
            <person name="Hiller N.L."/>
            <person name="Tettelin H."/>
            <person name="Muzzi A."/>
            <person name="Croucher N.J."/>
            <person name="Angiuoli S.V."/>
            <person name="Oggioni M."/>
            <person name="Dunning Hotopp J.C."/>
            <person name="Hu F.Z."/>
            <person name="Riley D.R."/>
            <person name="Covacci A."/>
            <person name="Mitchell T.J."/>
            <person name="Bentley S.D."/>
            <person name="Kilian M."/>
            <person name="Ehrlich G.D."/>
            <person name="Rappuoli R."/>
            <person name="Moxon E.R."/>
            <person name="Masignani V."/>
        </authorList>
    </citation>
    <scope>NUCLEOTIDE SEQUENCE [LARGE SCALE GENOMIC DNA]</scope>
    <source>
        <strain>P1031</strain>
    </source>
</reference>
<proteinExistence type="inferred from homology"/>
<comment type="function">
    <text evidence="1">Modulates RecA activity.</text>
</comment>
<comment type="subcellular location">
    <subcellularLocation>
        <location evidence="1">Cytoplasm</location>
    </subcellularLocation>
</comment>
<comment type="similarity">
    <text evidence="1">Belongs to the RecX family.</text>
</comment>
<sequence>MKITKLEKKKRLYLMELDGQQTSYITEDTIVRFMLSRDKVISKEELTEIQDFAQFSYGKNLALYHLSFKARTEKEVREYLKKYDIDKNIVSQVIANLKEDKWINDGQYAYAIINTNQLSGDKGPYVLTQKLAQKGISKSTIEENLKEFDFSEVAQRVANKLLKKYEGKLPSRALQDKIIQNLTNKGFSYSDAKIAFDDLDSQVDQETTQELIFKELDKQYSKYARKYEGYELKQRLTQVLARKGYDFSDIASALREYL</sequence>
<accession>C1CML5</accession>
<organism>
    <name type="scientific">Streptococcus pneumoniae (strain P1031)</name>
    <dbReference type="NCBI Taxonomy" id="488223"/>
    <lineage>
        <taxon>Bacteria</taxon>
        <taxon>Bacillati</taxon>
        <taxon>Bacillota</taxon>
        <taxon>Bacilli</taxon>
        <taxon>Lactobacillales</taxon>
        <taxon>Streptococcaceae</taxon>
        <taxon>Streptococcus</taxon>
    </lineage>
</organism>
<keyword id="KW-0963">Cytoplasm</keyword>